<keyword id="KW-0687">Ribonucleoprotein</keyword>
<keyword id="KW-0689">Ribosomal protein</keyword>
<protein>
    <recommendedName>
        <fullName evidence="1">Large ribosomal subunit protein bL28</fullName>
    </recommendedName>
    <alternativeName>
        <fullName evidence="2">50S ribosomal protein L28</fullName>
    </alternativeName>
</protein>
<organism>
    <name type="scientific">Thermobifida fusca (strain YX)</name>
    <dbReference type="NCBI Taxonomy" id="269800"/>
    <lineage>
        <taxon>Bacteria</taxon>
        <taxon>Bacillati</taxon>
        <taxon>Actinomycetota</taxon>
        <taxon>Actinomycetes</taxon>
        <taxon>Streptosporangiales</taxon>
        <taxon>Nocardiopsidaceae</taxon>
        <taxon>Thermobifida</taxon>
    </lineage>
</organism>
<gene>
    <name evidence="1" type="primary">rpmB</name>
    <name type="ordered locus">Tfu_0645</name>
</gene>
<accession>Q47S84</accession>
<reference key="1">
    <citation type="journal article" date="2007" name="J. Bacteriol.">
        <title>Genome sequence and analysis of the soil cellulolytic actinomycete Thermobifida fusca YX.</title>
        <authorList>
            <person name="Lykidis A."/>
            <person name="Mavromatis K."/>
            <person name="Ivanova N."/>
            <person name="Anderson I."/>
            <person name="Land M."/>
            <person name="DiBartolo G."/>
            <person name="Martinez M."/>
            <person name="Lapidus A."/>
            <person name="Lucas S."/>
            <person name="Copeland A."/>
            <person name="Richardson P."/>
            <person name="Wilson D.B."/>
            <person name="Kyrpides N."/>
        </authorList>
    </citation>
    <scope>NUCLEOTIDE SEQUENCE [LARGE SCALE GENOMIC DNA]</scope>
    <source>
        <strain>YX</strain>
    </source>
</reference>
<sequence>MASVCDICSKGPGFGNRISHSHRRTRRRWNPNIQTVRTRVGGTPKRLNVCTSCIKAGKVDRF</sequence>
<evidence type="ECO:0000255" key="1">
    <source>
        <dbReference type="HAMAP-Rule" id="MF_00373"/>
    </source>
</evidence>
<evidence type="ECO:0000305" key="2"/>
<dbReference type="EMBL" id="CP000088">
    <property type="protein sequence ID" value="AAZ54683.1"/>
    <property type="molecule type" value="Genomic_DNA"/>
</dbReference>
<dbReference type="RefSeq" id="WP_011291092.1">
    <property type="nucleotide sequence ID" value="NC_007333.1"/>
</dbReference>
<dbReference type="SMR" id="Q47S84"/>
<dbReference type="STRING" id="269800.Tfu_0645"/>
<dbReference type="KEGG" id="tfu:Tfu_0645"/>
<dbReference type="eggNOG" id="COG0227">
    <property type="taxonomic scope" value="Bacteria"/>
</dbReference>
<dbReference type="HOGENOM" id="CLU_064548_7_0_11"/>
<dbReference type="OrthoDB" id="9805609at2"/>
<dbReference type="GO" id="GO:1990904">
    <property type="term" value="C:ribonucleoprotein complex"/>
    <property type="evidence" value="ECO:0007669"/>
    <property type="project" value="UniProtKB-KW"/>
</dbReference>
<dbReference type="GO" id="GO:0005840">
    <property type="term" value="C:ribosome"/>
    <property type="evidence" value="ECO:0007669"/>
    <property type="project" value="UniProtKB-KW"/>
</dbReference>
<dbReference type="GO" id="GO:0003735">
    <property type="term" value="F:structural constituent of ribosome"/>
    <property type="evidence" value="ECO:0007669"/>
    <property type="project" value="InterPro"/>
</dbReference>
<dbReference type="GO" id="GO:0006412">
    <property type="term" value="P:translation"/>
    <property type="evidence" value="ECO:0007669"/>
    <property type="project" value="UniProtKB-UniRule"/>
</dbReference>
<dbReference type="FunFam" id="2.30.170.40:FF:000002">
    <property type="entry name" value="50S ribosomal protein L28"/>
    <property type="match status" value="1"/>
</dbReference>
<dbReference type="Gene3D" id="2.30.170.40">
    <property type="entry name" value="Ribosomal protein L28/L24"/>
    <property type="match status" value="1"/>
</dbReference>
<dbReference type="HAMAP" id="MF_00373">
    <property type="entry name" value="Ribosomal_bL28"/>
    <property type="match status" value="1"/>
</dbReference>
<dbReference type="InterPro" id="IPR050096">
    <property type="entry name" value="Bacterial_rp_bL28"/>
</dbReference>
<dbReference type="InterPro" id="IPR026569">
    <property type="entry name" value="Ribosomal_bL28"/>
</dbReference>
<dbReference type="InterPro" id="IPR034704">
    <property type="entry name" value="Ribosomal_bL28/bL31-like_sf"/>
</dbReference>
<dbReference type="InterPro" id="IPR001383">
    <property type="entry name" value="Ribosomal_bL28_bact-type"/>
</dbReference>
<dbReference type="InterPro" id="IPR037147">
    <property type="entry name" value="Ribosomal_bL28_sf"/>
</dbReference>
<dbReference type="NCBIfam" id="TIGR00009">
    <property type="entry name" value="L28"/>
    <property type="match status" value="1"/>
</dbReference>
<dbReference type="PANTHER" id="PTHR39080">
    <property type="entry name" value="50S RIBOSOMAL PROTEIN L28"/>
    <property type="match status" value="1"/>
</dbReference>
<dbReference type="PANTHER" id="PTHR39080:SF1">
    <property type="entry name" value="LARGE RIBOSOMAL SUBUNIT PROTEIN BL28A"/>
    <property type="match status" value="1"/>
</dbReference>
<dbReference type="Pfam" id="PF00830">
    <property type="entry name" value="Ribosomal_L28"/>
    <property type="match status" value="1"/>
</dbReference>
<dbReference type="SUPFAM" id="SSF143800">
    <property type="entry name" value="L28p-like"/>
    <property type="match status" value="1"/>
</dbReference>
<feature type="chain" id="PRO_1000007392" description="Large ribosomal subunit protein bL28">
    <location>
        <begin position="1"/>
        <end position="62"/>
    </location>
</feature>
<proteinExistence type="inferred from homology"/>
<name>RL28_THEFY</name>
<comment type="similarity">
    <text evidence="1">Belongs to the bacterial ribosomal protein bL28 family.</text>
</comment>